<protein>
    <recommendedName>
        <fullName evidence="1">Imidazole glycerol phosphate synthase subunit HisF</fullName>
        <ecNumber evidence="1">4.3.2.10</ecNumber>
    </recommendedName>
    <alternativeName>
        <fullName evidence="1">IGP synthase cyclase subunit</fullName>
    </alternativeName>
    <alternativeName>
        <fullName evidence="1">IGP synthase subunit HisF</fullName>
    </alternativeName>
    <alternativeName>
        <fullName evidence="1">ImGP synthase subunit HisF</fullName>
        <shortName evidence="1">IGPS subunit HisF</shortName>
    </alternativeName>
</protein>
<comment type="function">
    <text evidence="1">IGPS catalyzes the conversion of PRFAR and glutamine to IGP, AICAR and glutamate. The HisF subunit catalyzes the cyclization activity that produces IGP and AICAR from PRFAR using the ammonia provided by the HisH subunit.</text>
</comment>
<comment type="catalytic activity">
    <reaction evidence="1">
        <text>5-[(5-phospho-1-deoxy-D-ribulos-1-ylimino)methylamino]-1-(5-phospho-beta-D-ribosyl)imidazole-4-carboxamide + L-glutamine = D-erythro-1-(imidazol-4-yl)glycerol 3-phosphate + 5-amino-1-(5-phospho-beta-D-ribosyl)imidazole-4-carboxamide + L-glutamate + H(+)</text>
        <dbReference type="Rhea" id="RHEA:24793"/>
        <dbReference type="ChEBI" id="CHEBI:15378"/>
        <dbReference type="ChEBI" id="CHEBI:29985"/>
        <dbReference type="ChEBI" id="CHEBI:58278"/>
        <dbReference type="ChEBI" id="CHEBI:58359"/>
        <dbReference type="ChEBI" id="CHEBI:58475"/>
        <dbReference type="ChEBI" id="CHEBI:58525"/>
        <dbReference type="EC" id="4.3.2.10"/>
    </reaction>
</comment>
<comment type="pathway">
    <text evidence="1">Amino-acid biosynthesis; L-histidine biosynthesis; L-histidine from 5-phospho-alpha-D-ribose 1-diphosphate: step 5/9.</text>
</comment>
<comment type="subunit">
    <text evidence="1">Heterodimer of HisH and HisF.</text>
</comment>
<comment type="subcellular location">
    <subcellularLocation>
        <location evidence="1">Cytoplasm</location>
    </subcellularLocation>
</comment>
<comment type="similarity">
    <text evidence="1">Belongs to the HisA/HisF family.</text>
</comment>
<proteinExistence type="inferred from homology"/>
<dbReference type="EC" id="4.3.2.10" evidence="1"/>
<dbReference type="EMBL" id="AP009351">
    <property type="protein sequence ID" value="BAF68843.1"/>
    <property type="molecule type" value="Genomic_DNA"/>
</dbReference>
<dbReference type="SMR" id="A6QKG1"/>
<dbReference type="KEGG" id="sae:NWMN_2571"/>
<dbReference type="HOGENOM" id="CLU_048577_4_0_9"/>
<dbReference type="UniPathway" id="UPA00031">
    <property type="reaction ID" value="UER00010"/>
</dbReference>
<dbReference type="Proteomes" id="UP000006386">
    <property type="component" value="Chromosome"/>
</dbReference>
<dbReference type="GO" id="GO:0005737">
    <property type="term" value="C:cytoplasm"/>
    <property type="evidence" value="ECO:0007669"/>
    <property type="project" value="UniProtKB-SubCell"/>
</dbReference>
<dbReference type="GO" id="GO:0000107">
    <property type="term" value="F:imidazoleglycerol-phosphate synthase activity"/>
    <property type="evidence" value="ECO:0007669"/>
    <property type="project" value="UniProtKB-UniRule"/>
</dbReference>
<dbReference type="GO" id="GO:0016829">
    <property type="term" value="F:lyase activity"/>
    <property type="evidence" value="ECO:0007669"/>
    <property type="project" value="UniProtKB-KW"/>
</dbReference>
<dbReference type="GO" id="GO:0000105">
    <property type="term" value="P:L-histidine biosynthetic process"/>
    <property type="evidence" value="ECO:0007669"/>
    <property type="project" value="UniProtKB-UniRule"/>
</dbReference>
<dbReference type="CDD" id="cd04731">
    <property type="entry name" value="HisF"/>
    <property type="match status" value="1"/>
</dbReference>
<dbReference type="FunFam" id="3.20.20.70:FF:000462">
    <property type="entry name" value="Multifunctional fusion protein"/>
    <property type="match status" value="1"/>
</dbReference>
<dbReference type="Gene3D" id="3.20.20.70">
    <property type="entry name" value="Aldolase class I"/>
    <property type="match status" value="1"/>
</dbReference>
<dbReference type="HAMAP" id="MF_01013">
    <property type="entry name" value="HisF"/>
    <property type="match status" value="1"/>
</dbReference>
<dbReference type="InterPro" id="IPR013785">
    <property type="entry name" value="Aldolase_TIM"/>
</dbReference>
<dbReference type="InterPro" id="IPR006062">
    <property type="entry name" value="His_biosynth"/>
</dbReference>
<dbReference type="InterPro" id="IPR004651">
    <property type="entry name" value="HisF"/>
</dbReference>
<dbReference type="InterPro" id="IPR050064">
    <property type="entry name" value="IGPS_HisA/HisF"/>
</dbReference>
<dbReference type="InterPro" id="IPR011060">
    <property type="entry name" value="RibuloseP-bd_barrel"/>
</dbReference>
<dbReference type="NCBIfam" id="TIGR00735">
    <property type="entry name" value="hisF"/>
    <property type="match status" value="1"/>
</dbReference>
<dbReference type="PANTHER" id="PTHR21235:SF2">
    <property type="entry name" value="IMIDAZOLE GLYCEROL PHOSPHATE SYNTHASE HISHF"/>
    <property type="match status" value="1"/>
</dbReference>
<dbReference type="PANTHER" id="PTHR21235">
    <property type="entry name" value="IMIDAZOLE GLYCEROL PHOSPHATE SYNTHASE SUBUNIT HISF/H IGP SYNTHASE SUBUNIT HISF/H"/>
    <property type="match status" value="1"/>
</dbReference>
<dbReference type="Pfam" id="PF00977">
    <property type="entry name" value="His_biosynth"/>
    <property type="match status" value="1"/>
</dbReference>
<dbReference type="SUPFAM" id="SSF51366">
    <property type="entry name" value="Ribulose-phoshate binding barrel"/>
    <property type="match status" value="1"/>
</dbReference>
<accession>A6QKG1</accession>
<evidence type="ECO:0000255" key="1">
    <source>
        <dbReference type="HAMAP-Rule" id="MF_01013"/>
    </source>
</evidence>
<gene>
    <name evidence="1" type="primary">hisF</name>
    <name type="ordered locus">NWMN_2571</name>
</gene>
<sequence length="252" mass="27499">MIKKRIIPCLDVKDGRVVKGIQFKGLRDIGNPVDLAMYYNEAGADELVFLDISKTEEGHSLMLEVIEQTASRLFIPLTVGGGIQSLDDITQLLNHGADKVSLNSSALKNPQLIKQASDKFGRQCICIAIDSYYDPERKAHYCCTTGGKKMTNIKVYDWVQQVEQLGAGELLVTSMGHDGMKQGFDIEHLANIKSLVNIPIIASGGGGNAQHFVELFDQTDVSAGLAASILHDRETTVQSIKEVIRQGGIAVR</sequence>
<feature type="chain" id="PRO_1000072928" description="Imidazole glycerol phosphate synthase subunit HisF">
    <location>
        <begin position="1"/>
        <end position="252"/>
    </location>
</feature>
<feature type="active site" evidence="1">
    <location>
        <position position="11"/>
    </location>
</feature>
<feature type="active site" evidence="1">
    <location>
        <position position="130"/>
    </location>
</feature>
<organism>
    <name type="scientific">Staphylococcus aureus (strain Newman)</name>
    <dbReference type="NCBI Taxonomy" id="426430"/>
    <lineage>
        <taxon>Bacteria</taxon>
        <taxon>Bacillati</taxon>
        <taxon>Bacillota</taxon>
        <taxon>Bacilli</taxon>
        <taxon>Bacillales</taxon>
        <taxon>Staphylococcaceae</taxon>
        <taxon>Staphylococcus</taxon>
    </lineage>
</organism>
<reference key="1">
    <citation type="journal article" date="2008" name="J. Bacteriol.">
        <title>Genome sequence of Staphylococcus aureus strain Newman and comparative analysis of staphylococcal genomes: polymorphism and evolution of two major pathogenicity islands.</title>
        <authorList>
            <person name="Baba T."/>
            <person name="Bae T."/>
            <person name="Schneewind O."/>
            <person name="Takeuchi F."/>
            <person name="Hiramatsu K."/>
        </authorList>
    </citation>
    <scope>NUCLEOTIDE SEQUENCE [LARGE SCALE GENOMIC DNA]</scope>
    <source>
        <strain>Newman</strain>
    </source>
</reference>
<name>HIS6_STAAE</name>
<keyword id="KW-0028">Amino-acid biosynthesis</keyword>
<keyword id="KW-0963">Cytoplasm</keyword>
<keyword id="KW-0368">Histidine biosynthesis</keyword>
<keyword id="KW-0456">Lyase</keyword>